<evidence type="ECO:0000250" key="1">
    <source>
        <dbReference type="UniProtKB" id="Q9Y4X5"/>
    </source>
</evidence>
<evidence type="ECO:0000255" key="2">
    <source>
        <dbReference type="PROSITE-ProRule" id="PRU01221"/>
    </source>
</evidence>
<evidence type="ECO:0000256" key="3">
    <source>
        <dbReference type="SAM" id="MobiDB-lite"/>
    </source>
</evidence>
<evidence type="ECO:0000303" key="4">
    <source>
    </source>
</evidence>
<evidence type="ECO:0000305" key="5"/>
<evidence type="ECO:0007744" key="6">
    <source>
    </source>
</evidence>
<proteinExistence type="evidence at protein level"/>
<comment type="function">
    <text evidence="1">E3 ubiquitin-protein ligase, which catalyzes ubiquitination of target proteins together with ubiquitin-conjugating enzyme E2 UBE2L3. Acts as an atypical E3 ubiquitin-protein ligase by working together with cullin-RING ubiquitin ligase (CRL) complexes and initiating ubiquitination of CRL substrates: associates with CRL complexes and specifically mediates addition of the first ubiquitin on CRLs targets. The initial ubiquitin is then elongated by CDC34/UBE2R1 and UBE2R2. E3 ubiquitin-protein ligase activity is activated upon binding to neddylated cullin-RING ubiquitin ligase complexes. Plays a role in protein translation in response to DNA damage by mediating ubiquitination of EIF4E2, the consequences of EIF4E2 ubiquitination are however unclear. According to a report, EIF4E2 ubiquitination leads to promote EIF4E2 cap-binding and protein translation arrest. According to another report EIF4E2 ubiquitination leads to its subsequent degradation. Acts as the ligase involved in ISGylation of EIF4E2. In vitro, controls the degradation of the LINC (LInker of Nucleoskeleton and Cytoskeleton) complex member SUN2 and may therefore have a role in the formation and localization of the LINC complex, and as a consequence, may act in nuclear subcellular localization and nuclear morphology.</text>
</comment>
<comment type="catalytic activity">
    <reaction evidence="1">
        <text>[E2 ubiquitin-conjugating enzyme]-S-ubiquitinyl-L-cysteine + [acceptor protein]-L-lysine = [E2 ubiquitin-conjugating enzyme]-L-cysteine + [acceptor protein]-N(6)-ubiquitinyl-L-lysine.</text>
        <dbReference type="EC" id="2.3.2.31"/>
    </reaction>
</comment>
<comment type="activity regulation">
    <text evidence="1">Autoinhibited by the ariadne domain, which masks the second RING-type zinc finger that contains the active site and inhibits the E3 activity. Inhibition is relieved upon binding to neddylated cullin-RING ubiquitin ligase complexes, which activate the E3 ligase activity of ARIH1.</text>
</comment>
<comment type="pathway">
    <text>Protein modification; protein ubiquitination.</text>
</comment>
<comment type="subunit">
    <text evidence="1">Interacts (via the first RING-type zinc finger) with UBE2L3. Associates with cullin-RING ubiquitin ligase (CRL) complexes containing CUL1, CUL2 and CUL3. Interacts with neddylated CUL1. Interacts with neddylated CUL2. Interacts with neddylated CUL3. Interacts with neddylated CUL4A.</text>
</comment>
<comment type="subcellular location">
    <subcellularLocation>
        <location evidence="1">Cytoplasm</location>
    </subcellularLocation>
    <subcellularLocation>
        <location evidence="1">Nucleus</location>
    </subcellularLocation>
    <subcellularLocation>
        <location evidence="1">Nucleus</location>
        <location evidence="1">Cajal body</location>
    </subcellularLocation>
    <text evidence="1">Mainly cytoplasmic. Present in Lewy body.</text>
</comment>
<comment type="tissue specificity">
    <text>Widely expressed.</text>
</comment>
<comment type="domain">
    <text evidence="1">Members of the RBR family are atypical E3 ligases. They interact with the E2 conjugating enzyme UBE2L3 and function like HECT-type E3 enzymes: they bind E2s via the first RING-type zinc finger, but require an obligate trans-thiolation step during the ubiquitin transfer, requiring a conserved active site Cys residue in the second RING-type zinc finger. The active site probably forms a thioester intermediate with ubiquitin taken from the active-site cysteine of the E2 before ultimately transferring it to a Lys residue on the substrate.</text>
</comment>
<comment type="domain">
    <text evidence="1">The Ariadne domain inhibits activity by masking the second RING-type zinc finger that contains the active site.</text>
</comment>
<comment type="similarity">
    <text evidence="5">Belongs to the RBR family. Ariadne subfamily.</text>
</comment>
<comment type="sequence caution" evidence="5">
    <conflict type="erroneous initiation">
        <sequence resource="EMBL-CDS" id="AAH38034"/>
    </conflict>
    <text>Truncated N-terminus.</text>
</comment>
<keyword id="KW-0007">Acetylation</keyword>
<keyword id="KW-0963">Cytoplasm</keyword>
<keyword id="KW-0479">Metal-binding</keyword>
<keyword id="KW-0539">Nucleus</keyword>
<keyword id="KW-1185">Reference proteome</keyword>
<keyword id="KW-0677">Repeat</keyword>
<keyword id="KW-0808">Transferase</keyword>
<keyword id="KW-0833">Ubl conjugation pathway</keyword>
<keyword id="KW-0862">Zinc</keyword>
<keyword id="KW-0863">Zinc-finger</keyword>
<reference key="1">
    <citation type="journal article" date="2009" name="PLoS Biol.">
        <title>Lineage-specific biology revealed by a finished genome assembly of the mouse.</title>
        <authorList>
            <person name="Church D.M."/>
            <person name="Goodstadt L."/>
            <person name="Hillier L.W."/>
            <person name="Zody M.C."/>
            <person name="Goldstein S."/>
            <person name="She X."/>
            <person name="Bult C.J."/>
            <person name="Agarwala R."/>
            <person name="Cherry J.L."/>
            <person name="DiCuccio M."/>
            <person name="Hlavina W."/>
            <person name="Kapustin Y."/>
            <person name="Meric P."/>
            <person name="Maglott D."/>
            <person name="Birtle Z."/>
            <person name="Marques A.C."/>
            <person name="Graves T."/>
            <person name="Zhou S."/>
            <person name="Teague B."/>
            <person name="Potamousis K."/>
            <person name="Churas C."/>
            <person name="Place M."/>
            <person name="Herschleb J."/>
            <person name="Runnheim R."/>
            <person name="Forrest D."/>
            <person name="Amos-Landgraf J."/>
            <person name="Schwartz D.C."/>
            <person name="Cheng Z."/>
            <person name="Lindblad-Toh K."/>
            <person name="Eichler E.E."/>
            <person name="Ponting C.P."/>
        </authorList>
    </citation>
    <scope>NUCLEOTIDE SEQUENCE [LARGE SCALE GENOMIC DNA]</scope>
    <source>
        <strain>C57BL/6J</strain>
    </source>
</reference>
<reference key="2">
    <citation type="journal article" date="2004" name="Genome Res.">
        <title>The status, quality, and expansion of the NIH full-length cDNA project: the Mammalian Gene Collection (MGC).</title>
        <authorList>
            <consortium name="The MGC Project Team"/>
        </authorList>
    </citation>
    <scope>NUCLEOTIDE SEQUENCE [LARGE SCALE MRNA]</scope>
    <source>
        <strain>FVB/N</strain>
        <tissue>Mammary tumor</tissue>
    </source>
</reference>
<reference key="3">
    <citation type="journal article" date="1999" name="FEBS Lett.">
        <title>A family of structurally related RING finger proteins interacts specifically with the ubiquitin-conjugating enzyme UbcM4.</title>
        <authorList>
            <person name="Martinez-Noel G."/>
            <person name="Niedenthal R."/>
            <person name="Tamura T."/>
            <person name="Harbers K."/>
        </authorList>
    </citation>
    <scope>NUCLEOTIDE SEQUENCE [MRNA] OF 88-285</scope>
    <source>
        <strain>CD-1</strain>
        <tissue>Embryo</tissue>
    </source>
</reference>
<reference key="4">
    <citation type="journal article" date="2000" name="Genetics">
        <title>Ariadne-1: a vital Drosophila gene is required in development and defines a new conserved family of ring-finger proteins.</title>
        <authorList>
            <person name="Aguilera M."/>
            <person name="Oliveros M."/>
            <person name="Martinez-Padron M."/>
            <person name="Barbas J.A."/>
            <person name="Ferrus A."/>
        </authorList>
    </citation>
    <scope>NUCLEOTIDE SEQUENCE [MRNA] OF 93-555</scope>
</reference>
<reference key="5">
    <citation type="journal article" date="2000" name="Cytogenet. Cell Genet.">
        <title>Characterisation of the human and mouse orthologues of the Drosophila ariadne gene.</title>
        <authorList>
            <person name="Tan N.G."/>
            <person name="Ardley H.C."/>
            <person name="Rose S.A."/>
            <person name="Leek J.P."/>
            <person name="Markham A.F."/>
            <person name="Robinson P.A."/>
        </authorList>
    </citation>
    <scope>IDENTIFICATION</scope>
</reference>
<reference key="6">
    <citation type="journal article" date="2010" name="Cell">
        <title>A tissue-specific atlas of mouse protein phosphorylation and expression.</title>
        <authorList>
            <person name="Huttlin E.L."/>
            <person name="Jedrychowski M.P."/>
            <person name="Elias J.E."/>
            <person name="Goswami T."/>
            <person name="Rad R."/>
            <person name="Beausoleil S.A."/>
            <person name="Villen J."/>
            <person name="Haas W."/>
            <person name="Sowa M.E."/>
            <person name="Gygi S.P."/>
        </authorList>
    </citation>
    <scope>IDENTIFICATION BY MASS SPECTROMETRY [LARGE SCALE ANALYSIS]</scope>
    <source>
        <tissue>Brain</tissue>
        <tissue>Brown adipose tissue</tissue>
        <tissue>Heart</tissue>
        <tissue>Kidney</tissue>
        <tissue>Lung</tissue>
        <tissue>Pancreas</tissue>
        <tissue>Spleen</tissue>
        <tissue>Testis</tissue>
    </source>
</reference>
<reference key="7">
    <citation type="journal article" date="2013" name="Mol. Cell">
        <title>SIRT5-mediated lysine desuccinylation impacts diverse metabolic pathways.</title>
        <authorList>
            <person name="Park J."/>
            <person name="Chen Y."/>
            <person name="Tishkoff D.X."/>
            <person name="Peng C."/>
            <person name="Tan M."/>
            <person name="Dai L."/>
            <person name="Xie Z."/>
            <person name="Zhang Y."/>
            <person name="Zwaans B.M."/>
            <person name="Skinner M.E."/>
            <person name="Lombard D.B."/>
            <person name="Zhao Y."/>
        </authorList>
    </citation>
    <scope>ACETYLATION [LARGE SCALE ANALYSIS] AT LYS-140</scope>
    <scope>IDENTIFICATION BY MASS SPECTROMETRY [LARGE SCALE ANALYSIS]</scope>
    <source>
        <tissue>Embryonic fibroblast</tissue>
    </source>
</reference>
<name>ARI1_MOUSE</name>
<gene>
    <name type="primary">Arih1</name>
    <name type="synonym">Ari</name>
    <name evidence="4" type="synonym">Ubch7bp</name>
    <name evidence="4" type="synonym">Uip77</name>
</gene>
<protein>
    <recommendedName>
        <fullName>E3 ubiquitin-protein ligase ARIH1</fullName>
        <ecNumber evidence="1">2.3.2.31</ecNumber>
    </recommendedName>
    <alternativeName>
        <fullName>Protein ariadne-1 homolog</fullName>
        <shortName>ARI-1</shortName>
    </alternativeName>
    <alternativeName>
        <fullName>UbcH7-binding protein</fullName>
    </alternativeName>
    <alternativeName>
        <fullName evidence="4">UbcM4-interacting protein 77</fullName>
    </alternativeName>
    <alternativeName>
        <fullName>Ubiquitin-conjugating enzyme E2-binding protein 1</fullName>
    </alternativeName>
</protein>
<accession>Q9Z1K5</accession>
<accession>E9Q1X3</accession>
<accession>Q6PF92</accession>
<accession>Q8CFJ4</accession>
<dbReference type="EC" id="2.3.2.31" evidence="1"/>
<dbReference type="EMBL" id="AC113527">
    <property type="status" value="NOT_ANNOTATED_CDS"/>
    <property type="molecule type" value="Genomic_DNA"/>
</dbReference>
<dbReference type="EMBL" id="AC134894">
    <property type="status" value="NOT_ANNOTATED_CDS"/>
    <property type="molecule type" value="Genomic_DNA"/>
</dbReference>
<dbReference type="EMBL" id="BC038034">
    <property type="protein sequence ID" value="AAH38034.1"/>
    <property type="status" value="ALT_INIT"/>
    <property type="molecule type" value="mRNA"/>
</dbReference>
<dbReference type="EMBL" id="BC057680">
    <property type="protein sequence ID" value="AAH57680.1"/>
    <property type="molecule type" value="mRNA"/>
</dbReference>
<dbReference type="EMBL" id="AF361001">
    <property type="protein sequence ID" value="AAK51471.1"/>
    <property type="molecule type" value="mRNA"/>
</dbReference>
<dbReference type="EMBL" id="AJ130977">
    <property type="protein sequence ID" value="CAA10275.1"/>
    <property type="molecule type" value="mRNA"/>
</dbReference>
<dbReference type="CCDS" id="CCDS52817.1"/>
<dbReference type="RefSeq" id="NP_064311.2">
    <property type="nucleotide sequence ID" value="NM_019927.2"/>
</dbReference>
<dbReference type="SMR" id="Q9Z1K5"/>
<dbReference type="BioGRID" id="204726">
    <property type="interactions" value="6"/>
</dbReference>
<dbReference type="FunCoup" id="Q9Z1K5">
    <property type="interactions" value="3815"/>
</dbReference>
<dbReference type="IntAct" id="Q9Z1K5">
    <property type="interactions" value="3"/>
</dbReference>
<dbReference type="STRING" id="10090.ENSMUSP00000126531"/>
<dbReference type="GlyGen" id="Q9Z1K5">
    <property type="glycosylation" value="1 site, 1 O-linked glycan (1 site)"/>
</dbReference>
<dbReference type="iPTMnet" id="Q9Z1K5"/>
<dbReference type="PhosphoSitePlus" id="Q9Z1K5"/>
<dbReference type="SwissPalm" id="Q9Z1K5"/>
<dbReference type="PaxDb" id="10090-ENSMUSP00000126531"/>
<dbReference type="PeptideAtlas" id="Q9Z1K5"/>
<dbReference type="ProteomicsDB" id="282017"/>
<dbReference type="Pumba" id="Q9Z1K5"/>
<dbReference type="Antibodypedia" id="1143">
    <property type="antibodies" value="103 antibodies from 28 providers"/>
</dbReference>
<dbReference type="DNASU" id="23806"/>
<dbReference type="Ensembl" id="ENSMUST00000171975.8">
    <property type="protein sequence ID" value="ENSMUSP00000126531.2"/>
    <property type="gene ID" value="ENSMUSG00000025234.12"/>
</dbReference>
<dbReference type="GeneID" id="23806"/>
<dbReference type="KEGG" id="mmu:23806"/>
<dbReference type="UCSC" id="uc009pxs.2">
    <property type="organism name" value="mouse"/>
</dbReference>
<dbReference type="AGR" id="MGI:1344363"/>
<dbReference type="CTD" id="25820"/>
<dbReference type="MGI" id="MGI:1344363">
    <property type="gene designation" value="Arih1"/>
</dbReference>
<dbReference type="VEuPathDB" id="HostDB:ENSMUSG00000025234"/>
<dbReference type="eggNOG" id="KOG1815">
    <property type="taxonomic scope" value="Eukaryota"/>
</dbReference>
<dbReference type="GeneTree" id="ENSGT00940000155744"/>
<dbReference type="InParanoid" id="Q9Z1K5"/>
<dbReference type="OMA" id="HRFCMIC"/>
<dbReference type="OrthoDB" id="10009520at2759"/>
<dbReference type="PhylomeDB" id="Q9Z1K5"/>
<dbReference type="TreeFam" id="TF300805"/>
<dbReference type="BRENDA" id="2.3.2.23">
    <property type="organism ID" value="3474"/>
</dbReference>
<dbReference type="Reactome" id="R-MMU-1169408">
    <property type="pathway name" value="ISG15 antiviral mechanism"/>
</dbReference>
<dbReference type="Reactome" id="R-MMU-9833482">
    <property type="pathway name" value="PKR-mediated signaling"/>
</dbReference>
<dbReference type="Reactome" id="R-MMU-9909505">
    <property type="pathway name" value="Modulation of host responses by IFN-stimulated genes"/>
</dbReference>
<dbReference type="UniPathway" id="UPA00143"/>
<dbReference type="BioGRID-ORCS" id="23806">
    <property type="hits" value="23 hits in 76 CRISPR screens"/>
</dbReference>
<dbReference type="ChiTaRS" id="Arih1">
    <property type="organism name" value="mouse"/>
</dbReference>
<dbReference type="PRO" id="PR:Q9Z1K5"/>
<dbReference type="Proteomes" id="UP000000589">
    <property type="component" value="Chromosome 9"/>
</dbReference>
<dbReference type="RNAct" id="Q9Z1K5">
    <property type="molecule type" value="protein"/>
</dbReference>
<dbReference type="Bgee" id="ENSMUSG00000025234">
    <property type="expression patterns" value="Expressed in animal zygote and 269 other cell types or tissues"/>
</dbReference>
<dbReference type="ExpressionAtlas" id="Q9Z1K5">
    <property type="expression patterns" value="baseline and differential"/>
</dbReference>
<dbReference type="GO" id="GO:0015030">
    <property type="term" value="C:Cajal body"/>
    <property type="evidence" value="ECO:0007669"/>
    <property type="project" value="UniProtKB-SubCell"/>
</dbReference>
<dbReference type="GO" id="GO:0031462">
    <property type="term" value="C:Cul2-RING ubiquitin ligase complex"/>
    <property type="evidence" value="ECO:0007669"/>
    <property type="project" value="Ensembl"/>
</dbReference>
<dbReference type="GO" id="GO:0031463">
    <property type="term" value="C:Cul3-RING ubiquitin ligase complex"/>
    <property type="evidence" value="ECO:0007669"/>
    <property type="project" value="Ensembl"/>
</dbReference>
<dbReference type="GO" id="GO:0031464">
    <property type="term" value="C:Cul4A-RING E3 ubiquitin ligase complex"/>
    <property type="evidence" value="ECO:0007669"/>
    <property type="project" value="Ensembl"/>
</dbReference>
<dbReference type="GO" id="GO:0005737">
    <property type="term" value="C:cytoplasm"/>
    <property type="evidence" value="ECO:0000250"/>
    <property type="project" value="UniProtKB"/>
</dbReference>
<dbReference type="GO" id="GO:0097413">
    <property type="term" value="C:Lewy body"/>
    <property type="evidence" value="ECO:0000250"/>
    <property type="project" value="UniProtKB"/>
</dbReference>
<dbReference type="GO" id="GO:0016604">
    <property type="term" value="C:nuclear body"/>
    <property type="evidence" value="ECO:0000250"/>
    <property type="project" value="UniProtKB"/>
</dbReference>
<dbReference type="GO" id="GO:0019005">
    <property type="term" value="C:SCF ubiquitin ligase complex"/>
    <property type="evidence" value="ECO:0007669"/>
    <property type="project" value="Ensembl"/>
</dbReference>
<dbReference type="GO" id="GO:0031624">
    <property type="term" value="F:ubiquitin conjugating enzyme binding"/>
    <property type="evidence" value="ECO:0007669"/>
    <property type="project" value="Ensembl"/>
</dbReference>
<dbReference type="GO" id="GO:0031625">
    <property type="term" value="F:ubiquitin protein ligase binding"/>
    <property type="evidence" value="ECO:0007669"/>
    <property type="project" value="Ensembl"/>
</dbReference>
<dbReference type="GO" id="GO:0004842">
    <property type="term" value="F:ubiquitin-protein transferase activity"/>
    <property type="evidence" value="ECO:0000250"/>
    <property type="project" value="UniProtKB"/>
</dbReference>
<dbReference type="GO" id="GO:0008270">
    <property type="term" value="F:zinc ion binding"/>
    <property type="evidence" value="ECO:0000250"/>
    <property type="project" value="UniProtKB"/>
</dbReference>
<dbReference type="GO" id="GO:0016567">
    <property type="term" value="P:protein ubiquitination"/>
    <property type="evidence" value="ECO:0000250"/>
    <property type="project" value="UniProtKB"/>
</dbReference>
<dbReference type="GO" id="GO:0006511">
    <property type="term" value="P:ubiquitin-dependent protein catabolic process"/>
    <property type="evidence" value="ECO:0000353"/>
    <property type="project" value="MGI"/>
</dbReference>
<dbReference type="CDD" id="cd20343">
    <property type="entry name" value="BRcat_RBR_HHARI-like"/>
    <property type="match status" value="1"/>
</dbReference>
<dbReference type="CDD" id="cd20356">
    <property type="entry name" value="Rcat_RBR_HHARI-like"/>
    <property type="match status" value="1"/>
</dbReference>
<dbReference type="CDD" id="cd16626">
    <property type="entry name" value="RING-HC_RBR_HHARI"/>
    <property type="match status" value="1"/>
</dbReference>
<dbReference type="FunFam" id="1.20.120.1750:FF:000002">
    <property type="entry name" value="RBR-type E3 ubiquitin transferase"/>
    <property type="match status" value="1"/>
</dbReference>
<dbReference type="FunFam" id="3.30.40.10:FF:000019">
    <property type="entry name" value="RBR-type E3 ubiquitin transferase"/>
    <property type="match status" value="1"/>
</dbReference>
<dbReference type="Gene3D" id="1.20.120.1750">
    <property type="match status" value="1"/>
</dbReference>
<dbReference type="Gene3D" id="3.30.40.10">
    <property type="entry name" value="Zinc/RING finger domain, C3HC4 (zinc finger)"/>
    <property type="match status" value="1"/>
</dbReference>
<dbReference type="InterPro" id="IPR045840">
    <property type="entry name" value="Ariadne"/>
</dbReference>
<dbReference type="InterPro" id="IPR048962">
    <property type="entry name" value="ARIH1-like_UBL"/>
</dbReference>
<dbReference type="InterPro" id="IPR031127">
    <property type="entry name" value="E3_UB_ligase_RBR"/>
</dbReference>
<dbReference type="InterPro" id="IPR002867">
    <property type="entry name" value="IBR_dom"/>
</dbReference>
<dbReference type="InterPro" id="IPR044066">
    <property type="entry name" value="TRIAD_supradom"/>
</dbReference>
<dbReference type="InterPro" id="IPR018957">
    <property type="entry name" value="Znf_C3HC4_RING-type"/>
</dbReference>
<dbReference type="InterPro" id="IPR001841">
    <property type="entry name" value="Znf_RING"/>
</dbReference>
<dbReference type="InterPro" id="IPR013083">
    <property type="entry name" value="Znf_RING/FYVE/PHD"/>
</dbReference>
<dbReference type="PANTHER" id="PTHR11685">
    <property type="entry name" value="RBR FAMILY RING FINGER AND IBR DOMAIN-CONTAINING"/>
    <property type="match status" value="1"/>
</dbReference>
<dbReference type="Pfam" id="PF19422">
    <property type="entry name" value="Ariadne"/>
    <property type="match status" value="1"/>
</dbReference>
<dbReference type="Pfam" id="PF01485">
    <property type="entry name" value="IBR"/>
    <property type="match status" value="1"/>
</dbReference>
<dbReference type="Pfam" id="PF22191">
    <property type="entry name" value="IBR_1"/>
    <property type="match status" value="1"/>
</dbReference>
<dbReference type="Pfam" id="PF21235">
    <property type="entry name" value="UBA_ARI1"/>
    <property type="match status" value="1"/>
</dbReference>
<dbReference type="Pfam" id="PF00097">
    <property type="entry name" value="zf-C3HC4"/>
    <property type="match status" value="1"/>
</dbReference>
<dbReference type="SMART" id="SM00647">
    <property type="entry name" value="IBR"/>
    <property type="match status" value="2"/>
</dbReference>
<dbReference type="SMART" id="SM00184">
    <property type="entry name" value="RING"/>
    <property type="match status" value="2"/>
</dbReference>
<dbReference type="SUPFAM" id="SSF57850">
    <property type="entry name" value="RING/U-box"/>
    <property type="match status" value="3"/>
</dbReference>
<dbReference type="PROSITE" id="PS51873">
    <property type="entry name" value="TRIAD"/>
    <property type="match status" value="1"/>
</dbReference>
<dbReference type="PROSITE" id="PS50089">
    <property type="entry name" value="ZF_RING_2"/>
    <property type="match status" value="1"/>
</dbReference>
<feature type="chain" id="PRO_0000055753" description="E3 ubiquitin-protein ligase ARIH1">
    <location>
        <begin position="1"/>
        <end position="555"/>
    </location>
</feature>
<feature type="zinc finger region" description="RING-type 1" evidence="2">
    <location>
        <begin position="184"/>
        <end position="234"/>
    </location>
</feature>
<feature type="zinc finger region" description="IBR-type" evidence="2">
    <location>
        <begin position="254"/>
        <end position="315"/>
    </location>
</feature>
<feature type="zinc finger region" description="RING-type 2; atypical" evidence="2">
    <location>
        <begin position="342"/>
        <end position="373"/>
    </location>
</feature>
<feature type="region of interest" description="Disordered" evidence="3">
    <location>
        <begin position="1"/>
        <end position="93"/>
    </location>
</feature>
<feature type="region of interest" description="UBA-like" evidence="1">
    <location>
        <begin position="103"/>
        <end position="151"/>
    </location>
</feature>
<feature type="region of interest" description="TRIAD supradomain" evidence="2">
    <location>
        <begin position="180"/>
        <end position="391"/>
    </location>
</feature>
<feature type="region of interest" description="Ariadne domain" evidence="1">
    <location>
        <begin position="406"/>
        <end position="555"/>
    </location>
</feature>
<feature type="compositionally biased region" description="Acidic residues" evidence="3">
    <location>
        <begin position="1"/>
        <end position="47"/>
    </location>
</feature>
<feature type="compositionally biased region" description="Gly residues" evidence="3">
    <location>
        <begin position="65"/>
        <end position="90"/>
    </location>
</feature>
<feature type="active site" evidence="2">
    <location>
        <position position="355"/>
    </location>
</feature>
<feature type="binding site" evidence="2">
    <location>
        <position position="184"/>
    </location>
    <ligand>
        <name>Zn(2+)</name>
        <dbReference type="ChEBI" id="CHEBI:29105"/>
        <label>1</label>
    </ligand>
</feature>
<feature type="binding site" evidence="2">
    <location>
        <position position="187"/>
    </location>
    <ligand>
        <name>Zn(2+)</name>
        <dbReference type="ChEBI" id="CHEBI:29105"/>
        <label>1</label>
    </ligand>
</feature>
<feature type="binding site" evidence="2">
    <location>
        <position position="201"/>
    </location>
    <ligand>
        <name>Zn(2+)</name>
        <dbReference type="ChEBI" id="CHEBI:29105"/>
        <label>2</label>
    </ligand>
</feature>
<feature type="binding site" evidence="2">
    <location>
        <position position="203"/>
    </location>
    <ligand>
        <name>Zn(2+)</name>
        <dbReference type="ChEBI" id="CHEBI:29105"/>
        <label>2</label>
    </ligand>
</feature>
<feature type="binding site" evidence="2">
    <location>
        <position position="206"/>
    </location>
    <ligand>
        <name>Zn(2+)</name>
        <dbReference type="ChEBI" id="CHEBI:29105"/>
        <label>1</label>
    </ligand>
</feature>
<feature type="binding site" evidence="2">
    <location>
        <position position="209"/>
    </location>
    <ligand>
        <name>Zn(2+)</name>
        <dbReference type="ChEBI" id="CHEBI:29105"/>
        <label>1</label>
    </ligand>
</feature>
<feature type="binding site" evidence="2">
    <location>
        <position position="229"/>
    </location>
    <ligand>
        <name>Zn(2+)</name>
        <dbReference type="ChEBI" id="CHEBI:29105"/>
        <label>2</label>
    </ligand>
</feature>
<feature type="binding site" evidence="2">
    <location>
        <position position="234"/>
    </location>
    <ligand>
        <name>Zn(2+)</name>
        <dbReference type="ChEBI" id="CHEBI:29105"/>
        <label>2</label>
    </ligand>
</feature>
<feature type="binding site" evidence="2">
    <location>
        <position position="274"/>
    </location>
    <ligand>
        <name>Zn(2+)</name>
        <dbReference type="ChEBI" id="CHEBI:29105"/>
        <label>3</label>
    </ligand>
</feature>
<feature type="binding site" evidence="2">
    <location>
        <position position="279"/>
    </location>
    <ligand>
        <name>Zn(2+)</name>
        <dbReference type="ChEBI" id="CHEBI:29105"/>
        <label>3</label>
    </ligand>
</feature>
<feature type="binding site" evidence="2">
    <location>
        <position position="295"/>
    </location>
    <ligand>
        <name>Zn(2+)</name>
        <dbReference type="ChEBI" id="CHEBI:29105"/>
        <label>3</label>
    </ligand>
</feature>
<feature type="binding site" evidence="2">
    <location>
        <position position="297"/>
    </location>
    <ligand>
        <name>Zn(2+)</name>
        <dbReference type="ChEBI" id="CHEBI:29105"/>
        <label>3</label>
    </ligand>
</feature>
<feature type="binding site" evidence="2">
    <location>
        <position position="302"/>
    </location>
    <ligand>
        <name>Zn(2+)</name>
        <dbReference type="ChEBI" id="CHEBI:29105"/>
        <label>4</label>
    </ligand>
</feature>
<feature type="binding site" evidence="2">
    <location>
        <position position="305"/>
    </location>
    <ligand>
        <name>Zn(2+)</name>
        <dbReference type="ChEBI" id="CHEBI:29105"/>
        <label>4</label>
    </ligand>
</feature>
<feature type="binding site" evidence="2">
    <location>
        <position position="310"/>
    </location>
    <ligand>
        <name>Zn(2+)</name>
        <dbReference type="ChEBI" id="CHEBI:29105"/>
        <label>4</label>
    </ligand>
</feature>
<feature type="binding site" evidence="2">
    <location>
        <position position="315"/>
    </location>
    <ligand>
        <name>Zn(2+)</name>
        <dbReference type="ChEBI" id="CHEBI:29105"/>
        <label>4</label>
    </ligand>
</feature>
<feature type="binding site" evidence="2">
    <location>
        <position position="342"/>
    </location>
    <ligand>
        <name>Zn(2+)</name>
        <dbReference type="ChEBI" id="CHEBI:29105"/>
        <label>5</label>
    </ligand>
</feature>
<feature type="binding site" evidence="2">
    <location>
        <position position="345"/>
    </location>
    <ligand>
        <name>Zn(2+)</name>
        <dbReference type="ChEBI" id="CHEBI:29105"/>
        <label>5</label>
    </ligand>
</feature>
<feature type="binding site" evidence="2">
    <location>
        <position position="360"/>
    </location>
    <ligand>
        <name>Zn(2+)</name>
        <dbReference type="ChEBI" id="CHEBI:29105"/>
        <label>5</label>
    </ligand>
</feature>
<feature type="binding site" evidence="2">
    <location>
        <position position="365"/>
    </location>
    <ligand>
        <name>Zn(2+)</name>
        <dbReference type="ChEBI" id="CHEBI:29105"/>
        <label>5</label>
    </ligand>
</feature>
<feature type="binding site" evidence="2">
    <location>
        <position position="370"/>
    </location>
    <ligand>
        <name>Zn(2+)</name>
        <dbReference type="ChEBI" id="CHEBI:29105"/>
        <label>6</label>
    </ligand>
</feature>
<feature type="binding site" evidence="2">
    <location>
        <position position="373"/>
    </location>
    <ligand>
        <name>Zn(2+)</name>
        <dbReference type="ChEBI" id="CHEBI:29105"/>
        <label>6</label>
    </ligand>
</feature>
<feature type="binding site" evidence="2">
    <location>
        <position position="380"/>
    </location>
    <ligand>
        <name>Zn(2+)</name>
        <dbReference type="ChEBI" id="CHEBI:29105"/>
        <label>6</label>
    </ligand>
</feature>
<feature type="binding site" evidence="2">
    <location>
        <position position="387"/>
    </location>
    <ligand>
        <name>Zn(2+)</name>
        <dbReference type="ChEBI" id="CHEBI:29105"/>
        <label>6</label>
    </ligand>
</feature>
<feature type="modified residue" description="N6-acetyllysine" evidence="6">
    <location>
        <position position="140"/>
    </location>
</feature>
<feature type="sequence conflict" description="In Ref. 3; AAK51471." evidence="5" ref="3">
    <original>Y</original>
    <variation>C</variation>
    <location>
        <position position="147"/>
    </location>
</feature>
<feature type="sequence conflict" description="In Ref. 4; CAA10275." evidence="5" ref="4">
    <original>K</original>
    <variation>R</variation>
    <location>
        <position position="324"/>
    </location>
</feature>
<feature type="sequence conflict" description="In Ref. 4; CAA10275." evidence="5" ref="4">
    <original>D</original>
    <variation>G</variation>
    <location>
        <position position="328"/>
    </location>
</feature>
<feature type="sequence conflict" description="In Ref. 4; CAA10275." evidence="5" ref="4">
    <original>S</original>
    <variation>P</variation>
    <location>
        <position position="405"/>
    </location>
</feature>
<feature type="sequence conflict" description="In Ref. 4; CAA10275." evidence="5" ref="4">
    <original>F</original>
    <variation>YR</variation>
    <location>
        <position position="478"/>
    </location>
</feature>
<organism>
    <name type="scientific">Mus musculus</name>
    <name type="common">Mouse</name>
    <dbReference type="NCBI Taxonomy" id="10090"/>
    <lineage>
        <taxon>Eukaryota</taxon>
        <taxon>Metazoa</taxon>
        <taxon>Chordata</taxon>
        <taxon>Craniata</taxon>
        <taxon>Vertebrata</taxon>
        <taxon>Euteleostomi</taxon>
        <taxon>Mammalia</taxon>
        <taxon>Eutheria</taxon>
        <taxon>Euarchontoglires</taxon>
        <taxon>Glires</taxon>
        <taxon>Rodentia</taxon>
        <taxon>Myomorpha</taxon>
        <taxon>Muroidea</taxon>
        <taxon>Muridae</taxon>
        <taxon>Murinae</taxon>
        <taxon>Mus</taxon>
        <taxon>Mus</taxon>
    </lineage>
</organism>
<sequence>MDSDEGYNYEFDEDEECSEEDSGAEEEEDDDEDEPDDDNLDLGEVELVEPGLGVGGERDGLLCGETGGGGGSALGPGGGGGGGGGGGGPGHEQEEDYRYEVLTAEQILQHMVECIREVNEVIQNPATITRILLSHFNWDKEKLMERYFDGNLEKLFAECHVINPSKKSRTRQMNTRSSAQDMPCQICYLNYPNSYFTGLECGHKFCMQCWSEYLTTKIMEEGMGQTISCPAHGCDILVDDNTVMRLITDSKVKLKYQHLITNSFVECNRLLKWCPAPDCHHVVKVQYPDAKPVRCKCGRQFCFNCGENWHDPVKCKWLKKWIKKCDDDSETSNWIAANTKECPKCHVTIEKDGGCNHMVCRNQNCKAEFCWVCLGPWEPHGSAWYNCNRYNEDDAKAARDAQERSRAALQRYLFYCNRYMNHMQSLRFEHKLYAQVKQKMEEMQQHNMSWIEVQFLKKAVDVLCQCRATLMYTYVFAFYLKKNNQSIIFENNQADLENATEVLSGYLERDISQDSLQDIKQKVQDKYRYCESRRRVLLQHVHEGYEKDLWEYIED</sequence>